<reference key="1">
    <citation type="journal article" date="2005" name="Nature">
        <title>The genome of the social amoeba Dictyostelium discoideum.</title>
        <authorList>
            <person name="Eichinger L."/>
            <person name="Pachebat J.A."/>
            <person name="Gloeckner G."/>
            <person name="Rajandream M.A."/>
            <person name="Sucgang R."/>
            <person name="Berriman M."/>
            <person name="Song J."/>
            <person name="Olsen R."/>
            <person name="Szafranski K."/>
            <person name="Xu Q."/>
            <person name="Tunggal B."/>
            <person name="Kummerfeld S."/>
            <person name="Madera M."/>
            <person name="Konfortov B.A."/>
            <person name="Rivero F."/>
            <person name="Bankier A.T."/>
            <person name="Lehmann R."/>
            <person name="Hamlin N."/>
            <person name="Davies R."/>
            <person name="Gaudet P."/>
            <person name="Fey P."/>
            <person name="Pilcher K."/>
            <person name="Chen G."/>
            <person name="Saunders D."/>
            <person name="Sodergren E.J."/>
            <person name="Davis P."/>
            <person name="Kerhornou A."/>
            <person name="Nie X."/>
            <person name="Hall N."/>
            <person name="Anjard C."/>
            <person name="Hemphill L."/>
            <person name="Bason N."/>
            <person name="Farbrother P."/>
            <person name="Desany B."/>
            <person name="Just E."/>
            <person name="Morio T."/>
            <person name="Rost R."/>
            <person name="Churcher C.M."/>
            <person name="Cooper J."/>
            <person name="Haydock S."/>
            <person name="van Driessche N."/>
            <person name="Cronin A."/>
            <person name="Goodhead I."/>
            <person name="Muzny D.M."/>
            <person name="Mourier T."/>
            <person name="Pain A."/>
            <person name="Lu M."/>
            <person name="Harper D."/>
            <person name="Lindsay R."/>
            <person name="Hauser H."/>
            <person name="James K.D."/>
            <person name="Quiles M."/>
            <person name="Madan Babu M."/>
            <person name="Saito T."/>
            <person name="Buchrieser C."/>
            <person name="Wardroper A."/>
            <person name="Felder M."/>
            <person name="Thangavelu M."/>
            <person name="Johnson D."/>
            <person name="Knights A."/>
            <person name="Loulseged H."/>
            <person name="Mungall K.L."/>
            <person name="Oliver K."/>
            <person name="Price C."/>
            <person name="Quail M.A."/>
            <person name="Urushihara H."/>
            <person name="Hernandez J."/>
            <person name="Rabbinowitsch E."/>
            <person name="Steffen D."/>
            <person name="Sanders M."/>
            <person name="Ma J."/>
            <person name="Kohara Y."/>
            <person name="Sharp S."/>
            <person name="Simmonds M.N."/>
            <person name="Spiegler S."/>
            <person name="Tivey A."/>
            <person name="Sugano S."/>
            <person name="White B."/>
            <person name="Walker D."/>
            <person name="Woodward J.R."/>
            <person name="Winckler T."/>
            <person name="Tanaka Y."/>
            <person name="Shaulsky G."/>
            <person name="Schleicher M."/>
            <person name="Weinstock G.M."/>
            <person name="Rosenthal A."/>
            <person name="Cox E.C."/>
            <person name="Chisholm R.L."/>
            <person name="Gibbs R.A."/>
            <person name="Loomis W.F."/>
            <person name="Platzer M."/>
            <person name="Kay R.R."/>
            <person name="Williams J.G."/>
            <person name="Dear P.H."/>
            <person name="Noegel A.A."/>
            <person name="Barrell B.G."/>
            <person name="Kuspa A."/>
        </authorList>
    </citation>
    <scope>NUCLEOTIDE SEQUENCE [LARGE SCALE GENOMIC DNA]</scope>
    <source>
        <strain>AX4</strain>
    </source>
</reference>
<sequence>MNQLLSKSFKPLVVAGVAVIGISAFSGNRAYDEYRKERESISKKMINDLNENKITMFDYFQECKTLGRDEQLSKLNKLSKVYNKQKLNEQENQEELIDLDLIVIGGGATGTGVALDAQSRGMKVALFEKYDFSSGTSSKSTKLVHGGIRYLESAIMKLKPSELTLVKEALRERSNLLNNAPHLSRQLPIVIPAYSIFDASKFWIGCKLYDFFYPFNDIPKSYLQTSAQTYKEFPFLREGLVSSVVYYDGQHNDSRMNVSLALTAAQQGALTLNYTEVVELIKDDKINNNNKQQQLKGVVIRDRLTGKKYSVPAKCVVNATGPYCDSIRNLDDPRADPIITASSGVHIMLPGNLIPSDKGFLNPKTKDGRVLFILPFEGKTLVGTTDDPSPIIENPQPLEKDVEFILDSIKEYSNPNVKLDKSQVLACWSGIRPLVSDEPAAQGDNKKSTSQVTRSHSLRMSESGLITIVGGKWTTYRSMAEATVNLVCSKHDIFTPKGCITKNLPLIGGEKYYNTLNQYLIKNFNLPEDIAEHLAHSYGDQAPFVAKLANENGSNKRLVEGYPYIEAEVTYGVKKEYACTAEDIIGRRTRLSFLDHDKAEIALPKIINIMAPLLKWSNERKKEELKNSQNYLKTMTSK</sequence>
<name>GPDM_DICDI</name>
<keyword id="KW-0274">FAD</keyword>
<keyword id="KW-0285">Flavoprotein</keyword>
<keyword id="KW-0496">Mitochondrion</keyword>
<keyword id="KW-0560">Oxidoreductase</keyword>
<keyword id="KW-1185">Reference proteome</keyword>
<keyword id="KW-0809">Transit peptide</keyword>
<organism>
    <name type="scientific">Dictyostelium discoideum</name>
    <name type="common">Social amoeba</name>
    <dbReference type="NCBI Taxonomy" id="44689"/>
    <lineage>
        <taxon>Eukaryota</taxon>
        <taxon>Amoebozoa</taxon>
        <taxon>Evosea</taxon>
        <taxon>Eumycetozoa</taxon>
        <taxon>Dictyostelia</taxon>
        <taxon>Dictyosteliales</taxon>
        <taxon>Dictyosteliaceae</taxon>
        <taxon>Dictyostelium</taxon>
    </lineage>
</organism>
<dbReference type="EC" id="1.1.5.3"/>
<dbReference type="EMBL" id="AAFI02000058">
    <property type="protein sequence ID" value="EAL65463.1"/>
    <property type="molecule type" value="Genomic_DNA"/>
</dbReference>
<dbReference type="RefSeq" id="XP_638823.1">
    <property type="nucleotide sequence ID" value="XM_633731.1"/>
</dbReference>
<dbReference type="SMR" id="Q54QC1"/>
<dbReference type="FunCoup" id="Q54QC1">
    <property type="interactions" value="467"/>
</dbReference>
<dbReference type="STRING" id="44689.Q54QC1"/>
<dbReference type="PaxDb" id="44689-DDB0185769"/>
<dbReference type="EnsemblProtists" id="EAL65463">
    <property type="protein sequence ID" value="EAL65463"/>
    <property type="gene ID" value="DDB_G0283951"/>
</dbReference>
<dbReference type="GeneID" id="8624347"/>
<dbReference type="KEGG" id="ddi:DDB_G0283951"/>
<dbReference type="dictyBase" id="DDB_G0283951"/>
<dbReference type="VEuPathDB" id="AmoebaDB:DDB_G0283951"/>
<dbReference type="eggNOG" id="KOG0042">
    <property type="taxonomic scope" value="Eukaryota"/>
</dbReference>
<dbReference type="HOGENOM" id="CLU_015740_4_1_1"/>
<dbReference type="InParanoid" id="Q54QC1"/>
<dbReference type="OMA" id="PHIVKPM"/>
<dbReference type="PhylomeDB" id="Q54QC1"/>
<dbReference type="Reactome" id="R-DDI-1483166">
    <property type="pathway name" value="Synthesis of PA"/>
</dbReference>
<dbReference type="Reactome" id="R-DDI-163560">
    <property type="pathway name" value="Triglyceride catabolism"/>
</dbReference>
<dbReference type="UniPathway" id="UPA00618">
    <property type="reaction ID" value="UER00673"/>
</dbReference>
<dbReference type="PRO" id="PR:Q54QC1"/>
<dbReference type="Proteomes" id="UP000002195">
    <property type="component" value="Chromosome 4"/>
</dbReference>
<dbReference type="GO" id="GO:0005739">
    <property type="term" value="C:mitochondrion"/>
    <property type="evidence" value="ECO:0000318"/>
    <property type="project" value="GO_Central"/>
</dbReference>
<dbReference type="GO" id="GO:0004368">
    <property type="term" value="F:glycerol-3-phosphate dehydrogenase (quinone) activity"/>
    <property type="evidence" value="ECO:0000318"/>
    <property type="project" value="GO_Central"/>
</dbReference>
<dbReference type="GO" id="GO:0019563">
    <property type="term" value="P:glycerol catabolic process"/>
    <property type="evidence" value="ECO:0007669"/>
    <property type="project" value="UniProtKB-UniPathway"/>
</dbReference>
<dbReference type="GO" id="GO:0006072">
    <property type="term" value="P:glycerol-3-phosphate metabolic process"/>
    <property type="evidence" value="ECO:0000318"/>
    <property type="project" value="GO_Central"/>
</dbReference>
<dbReference type="GO" id="GO:0006127">
    <property type="term" value="P:glycerol-3-phosphate shuttle"/>
    <property type="evidence" value="ECO:0000318"/>
    <property type="project" value="GO_Central"/>
</dbReference>
<dbReference type="FunFam" id="1.10.8.870:FF:000004">
    <property type="entry name" value="Glycerol-3-phosphate dehydrogenase"/>
    <property type="match status" value="1"/>
</dbReference>
<dbReference type="Gene3D" id="1.10.8.870">
    <property type="entry name" value="Alpha-glycerophosphate oxidase, cap domain"/>
    <property type="match status" value="1"/>
</dbReference>
<dbReference type="Gene3D" id="3.30.9.10">
    <property type="entry name" value="D-Amino Acid Oxidase, subunit A, domain 2"/>
    <property type="match status" value="1"/>
</dbReference>
<dbReference type="Gene3D" id="3.50.50.60">
    <property type="entry name" value="FAD/NAD(P)-binding domain"/>
    <property type="match status" value="1"/>
</dbReference>
<dbReference type="InterPro" id="IPR031656">
    <property type="entry name" value="DAO_C"/>
</dbReference>
<dbReference type="InterPro" id="IPR038299">
    <property type="entry name" value="DAO_C_sf"/>
</dbReference>
<dbReference type="InterPro" id="IPR006076">
    <property type="entry name" value="FAD-dep_OxRdtase"/>
</dbReference>
<dbReference type="InterPro" id="IPR036188">
    <property type="entry name" value="FAD/NAD-bd_sf"/>
</dbReference>
<dbReference type="InterPro" id="IPR000447">
    <property type="entry name" value="G3P_DH_FAD-dep"/>
</dbReference>
<dbReference type="PANTHER" id="PTHR11985">
    <property type="entry name" value="GLYCEROL-3-PHOSPHATE DEHYDROGENASE"/>
    <property type="match status" value="1"/>
</dbReference>
<dbReference type="PANTHER" id="PTHR11985:SF15">
    <property type="entry name" value="GLYCEROL-3-PHOSPHATE DEHYDROGENASE, MITOCHONDRIAL"/>
    <property type="match status" value="1"/>
</dbReference>
<dbReference type="Pfam" id="PF01266">
    <property type="entry name" value="DAO"/>
    <property type="match status" value="1"/>
</dbReference>
<dbReference type="Pfam" id="PF16901">
    <property type="entry name" value="DAO_C"/>
    <property type="match status" value="1"/>
</dbReference>
<dbReference type="PRINTS" id="PR01001">
    <property type="entry name" value="FADG3PDH"/>
</dbReference>
<dbReference type="SUPFAM" id="SSF54373">
    <property type="entry name" value="FAD-linked reductases, C-terminal domain"/>
    <property type="match status" value="1"/>
</dbReference>
<dbReference type="SUPFAM" id="SSF51905">
    <property type="entry name" value="FAD/NAD(P)-binding domain"/>
    <property type="match status" value="1"/>
</dbReference>
<dbReference type="PROSITE" id="PS00977">
    <property type="entry name" value="FAD_G3PDH_1"/>
    <property type="match status" value="1"/>
</dbReference>
<dbReference type="PROSITE" id="PS00978">
    <property type="entry name" value="FAD_G3PDH_2"/>
    <property type="match status" value="1"/>
</dbReference>
<gene>
    <name type="ORF">DDB_G0283951</name>
</gene>
<evidence type="ECO:0000250" key="1"/>
<evidence type="ECO:0000255" key="2"/>
<evidence type="ECO:0000305" key="3"/>
<protein>
    <recommendedName>
        <fullName>Probable glycerol-3-phosphate dehydrogenase, mitochondrial</fullName>
        <shortName>GPD-M</shortName>
        <shortName>GPDH-M</shortName>
        <ecNumber>1.1.5.3</ecNumber>
    </recommendedName>
</protein>
<proteinExistence type="inferred from homology"/>
<comment type="catalytic activity">
    <reaction>
        <text>a quinone + sn-glycerol 3-phosphate = dihydroxyacetone phosphate + a quinol</text>
        <dbReference type="Rhea" id="RHEA:18977"/>
        <dbReference type="ChEBI" id="CHEBI:24646"/>
        <dbReference type="ChEBI" id="CHEBI:57597"/>
        <dbReference type="ChEBI" id="CHEBI:57642"/>
        <dbReference type="ChEBI" id="CHEBI:132124"/>
        <dbReference type="EC" id="1.1.5.3"/>
    </reaction>
</comment>
<comment type="cofactor">
    <cofactor evidence="1">
        <name>FAD</name>
        <dbReference type="ChEBI" id="CHEBI:57692"/>
    </cofactor>
</comment>
<comment type="pathway">
    <text>Polyol metabolism; glycerol degradation via glycerol kinase pathway; glycerone phosphate from sn-glycerol 3-phosphate (anaerobic route): step 1/1.</text>
</comment>
<comment type="subcellular location">
    <subcellularLocation>
        <location evidence="1">Mitochondrion</location>
    </subcellularLocation>
</comment>
<comment type="similarity">
    <text evidence="3">Belongs to the FAD-dependent glycerol-3-phosphate dehydrogenase family.</text>
</comment>
<accession>Q54QC1</accession>
<feature type="transit peptide" description="Mitochondrion" evidence="2">
    <location>
        <begin position="1"/>
        <end status="unknown"/>
    </location>
</feature>
<feature type="chain" id="PRO_0000355967" description="Probable glycerol-3-phosphate dehydrogenase, mitochondrial">
    <location>
        <begin status="unknown"/>
        <end position="638"/>
    </location>
</feature>
<feature type="binding site" evidence="2">
    <location>
        <begin position="100"/>
        <end position="128"/>
    </location>
    <ligand>
        <name>FAD</name>
        <dbReference type="ChEBI" id="CHEBI:57692"/>
    </ligand>
</feature>